<reference key="1">
    <citation type="journal article" date="1991" name="J. Exp. Med.">
        <title>The Trypanosoma cruzi neuraminidase contains sequences similar to bacterial neuraminidases, YWTD repeats of the low density lipoprotein receptor, and type III modules of fibronectin.</title>
        <authorList>
            <person name="Pereira M.E.A."/>
            <person name="Mejia J.S."/>
            <person name="Ortega-Barria E."/>
            <person name="Matzilevich D."/>
            <person name="Prioli R.P."/>
        </authorList>
    </citation>
    <scope>NUCLEOTIDE SEQUENCE [GENOMIC DNA]</scope>
    <source>
        <strain>Silvio X-10/4</strain>
    </source>
</reference>
<reference key="2">
    <citation type="journal article" date="1991" name="Trop. Med. Parasitol.">
        <title>Trypanosoma cruzi: localization of neuraminidase on the surface of trypomastigotes.</title>
        <authorList>
            <person name="Prioli R.P."/>
            <person name="Mejia J.S."/>
            <person name="Aji T."/>
            <person name="Aikawa M."/>
            <person name="Pereira M.E.A."/>
        </authorList>
    </citation>
    <scope>SUBCELLULAR LOCATION</scope>
</reference>
<organism>
    <name type="scientific">Trypanosoma cruzi</name>
    <dbReference type="NCBI Taxonomy" id="5693"/>
    <lineage>
        <taxon>Eukaryota</taxon>
        <taxon>Discoba</taxon>
        <taxon>Euglenozoa</taxon>
        <taxon>Kinetoplastea</taxon>
        <taxon>Metakinetoplastina</taxon>
        <taxon>Trypanosomatida</taxon>
        <taxon>Trypanosomatidae</taxon>
        <taxon>Trypanosoma</taxon>
        <taxon>Schizotrypanum</taxon>
    </lineage>
</organism>
<protein>
    <recommendedName>
        <fullName>Sialidase</fullName>
        <ecNumber>3.2.1.18</ecNumber>
    </recommendedName>
    <alternativeName>
        <fullName>Major surface antigen</fullName>
    </alternativeName>
    <alternativeName>
        <fullName>Neuraminidase</fullName>
        <shortName>NA</shortName>
    </alternativeName>
</protein>
<feature type="chain" id="PRO_0000208910" description="Sialidase">
    <location>
        <begin position="1"/>
        <end position="1162"/>
    </location>
</feature>
<feature type="repeat" description="BNR 1">
    <location>
        <begin position="23"/>
        <end position="34"/>
    </location>
</feature>
<feature type="repeat" description="BNR 2">
    <location>
        <begin position="163"/>
        <end position="174"/>
    </location>
</feature>
<feature type="repeat" description="BNR 3">
    <location>
        <begin position="209"/>
        <end position="220"/>
    </location>
</feature>
<feature type="region of interest" description="Disordered" evidence="2">
    <location>
        <begin position="587"/>
        <end position="1123"/>
    </location>
</feature>
<feature type="region of interest" description="44 X 12 AA tandem repeats, LTR domain">
    <location>
        <begin position="589"/>
        <end position="1120"/>
    </location>
</feature>
<feature type="compositionally biased region" description="Low complexity" evidence="2">
    <location>
        <begin position="589"/>
        <end position="615"/>
    </location>
</feature>
<feature type="compositionally biased region" description="Polar residues" evidence="2">
    <location>
        <begin position="616"/>
        <end position="689"/>
    </location>
</feature>
<feature type="compositionally biased region" description="Polar residues" evidence="2">
    <location>
        <begin position="699"/>
        <end position="1123"/>
    </location>
</feature>
<feature type="glycosylation site" description="N-linked (GlcNAc...) asparagine" evidence="1">
    <location>
        <position position="342"/>
    </location>
</feature>
<feature type="glycosylation site" description="N-linked (GlcNAc...) asparagine" evidence="1">
    <location>
        <position position="394"/>
    </location>
</feature>
<feature type="glycosylation site" description="N-linked (GlcNAc...) asparagine" evidence="1">
    <location>
        <position position="1125"/>
    </location>
</feature>
<dbReference type="EC" id="3.2.1.18"/>
<dbReference type="EMBL" id="M61732">
    <property type="protein sequence ID" value="AAA30255.1"/>
    <property type="molecule type" value="Genomic_DNA"/>
</dbReference>
<dbReference type="PIR" id="JH0557">
    <property type="entry name" value="JH0557"/>
</dbReference>
<dbReference type="SMR" id="P23253"/>
<dbReference type="CAZy" id="GH33">
    <property type="family name" value="Glycoside Hydrolase Family 33"/>
</dbReference>
<dbReference type="GlyCosmos" id="P23253">
    <property type="glycosylation" value="3 sites, No reported glycans"/>
</dbReference>
<dbReference type="VEuPathDB" id="TriTrypDB:BCY84_01981"/>
<dbReference type="VEuPathDB" id="TriTrypDB:C3747_24g366"/>
<dbReference type="VEuPathDB" id="TriTrypDB:C3747_34g136"/>
<dbReference type="VEuPathDB" id="TriTrypDB:C4B63_136g6"/>
<dbReference type="VEuPathDB" id="TriTrypDB:C4B63_69g34"/>
<dbReference type="VEuPathDB" id="TriTrypDB:C4B63_69g50"/>
<dbReference type="VEuPathDB" id="TriTrypDB:ECC02_001599"/>
<dbReference type="VEuPathDB" id="TriTrypDB:ECC02_006627"/>
<dbReference type="VEuPathDB" id="TriTrypDB:Tc_MARK_7083"/>
<dbReference type="VEuPathDB" id="TriTrypDB:Tc_MARK_7565"/>
<dbReference type="VEuPathDB" id="TriTrypDB:Tc_MARK_7746"/>
<dbReference type="VEuPathDB" id="TriTrypDB:TcBrA4_0148830"/>
<dbReference type="VEuPathDB" id="TriTrypDB:TcBrA4_0148920"/>
<dbReference type="VEuPathDB" id="TriTrypDB:TcBrA4_0148930"/>
<dbReference type="VEuPathDB" id="TriTrypDB:TcCL_NonESM05117"/>
<dbReference type="VEuPathDB" id="TriTrypDB:TcCL_NonESM13817"/>
<dbReference type="VEuPathDB" id="TriTrypDB:TcCL_Unassigned02121"/>
<dbReference type="VEuPathDB" id="TriTrypDB:TcCLB.401569.10"/>
<dbReference type="VEuPathDB" id="TriTrypDB:TcCLB.507979.30"/>
<dbReference type="VEuPathDB" id="TriTrypDB:TcCLB.509481.10"/>
<dbReference type="VEuPathDB" id="TriTrypDB:TcCLB.510095.20"/>
<dbReference type="VEuPathDB" id="TriTrypDB:TcCLB.510787.10"/>
<dbReference type="VEuPathDB" id="TriTrypDB:TCDM_09295"/>
<dbReference type="VEuPathDB" id="TriTrypDB:TcG_05563"/>
<dbReference type="VEuPathDB" id="TriTrypDB:TcG_07787"/>
<dbReference type="VEuPathDB" id="TriTrypDB:TCSYLVIO_000115"/>
<dbReference type="VEuPathDB" id="TriTrypDB:TCSYLVIO_003468"/>
<dbReference type="VEuPathDB" id="TriTrypDB:TCSYLVIO_003553"/>
<dbReference type="VEuPathDB" id="TriTrypDB:TcYC6_0130920"/>
<dbReference type="GO" id="GO:0005737">
    <property type="term" value="C:cytoplasm"/>
    <property type="evidence" value="ECO:0007669"/>
    <property type="project" value="TreeGrafter"/>
</dbReference>
<dbReference type="GO" id="GO:0043231">
    <property type="term" value="C:intracellular membrane-bounded organelle"/>
    <property type="evidence" value="ECO:0007669"/>
    <property type="project" value="TreeGrafter"/>
</dbReference>
<dbReference type="GO" id="GO:0005886">
    <property type="term" value="C:plasma membrane"/>
    <property type="evidence" value="ECO:0007669"/>
    <property type="project" value="UniProtKB-SubCell"/>
</dbReference>
<dbReference type="GO" id="GO:0098552">
    <property type="term" value="C:side of membrane"/>
    <property type="evidence" value="ECO:0007669"/>
    <property type="project" value="UniProtKB-KW"/>
</dbReference>
<dbReference type="GO" id="GO:0004308">
    <property type="term" value="F:exo-alpha-sialidase activity"/>
    <property type="evidence" value="ECO:0007669"/>
    <property type="project" value="UniProtKB-EC"/>
</dbReference>
<dbReference type="GO" id="GO:0006689">
    <property type="term" value="P:ganglioside catabolic process"/>
    <property type="evidence" value="ECO:0007669"/>
    <property type="project" value="TreeGrafter"/>
</dbReference>
<dbReference type="GO" id="GO:0009313">
    <property type="term" value="P:oligosaccharide catabolic process"/>
    <property type="evidence" value="ECO:0007669"/>
    <property type="project" value="TreeGrafter"/>
</dbReference>
<dbReference type="CDD" id="cd15482">
    <property type="entry name" value="Sialidase_non-viral"/>
    <property type="match status" value="1"/>
</dbReference>
<dbReference type="Gene3D" id="2.120.10.10">
    <property type="match status" value="1"/>
</dbReference>
<dbReference type="Gene3D" id="2.60.120.200">
    <property type="match status" value="1"/>
</dbReference>
<dbReference type="InterPro" id="IPR013320">
    <property type="entry name" value="ConA-like_dom_sf"/>
</dbReference>
<dbReference type="InterPro" id="IPR011040">
    <property type="entry name" value="Sialidase"/>
</dbReference>
<dbReference type="InterPro" id="IPR026856">
    <property type="entry name" value="Sialidase_fam"/>
</dbReference>
<dbReference type="InterPro" id="IPR036278">
    <property type="entry name" value="Sialidase_sf"/>
</dbReference>
<dbReference type="InterPro" id="IPR008377">
    <property type="entry name" value="Sialidase_trypan"/>
</dbReference>
<dbReference type="InterPro" id="IPR055239">
    <property type="entry name" value="TS_C"/>
</dbReference>
<dbReference type="PANTHER" id="PTHR10628:SF30">
    <property type="entry name" value="EXO-ALPHA-SIALIDASE"/>
    <property type="match status" value="1"/>
</dbReference>
<dbReference type="PANTHER" id="PTHR10628">
    <property type="entry name" value="SIALIDASE"/>
    <property type="match status" value="1"/>
</dbReference>
<dbReference type="Pfam" id="PF13859">
    <property type="entry name" value="BNR_3"/>
    <property type="match status" value="1"/>
</dbReference>
<dbReference type="Pfam" id="PF22925">
    <property type="entry name" value="TS_C"/>
    <property type="match status" value="1"/>
</dbReference>
<dbReference type="PRINTS" id="PR01803">
    <property type="entry name" value="TCSIALIDASE"/>
</dbReference>
<dbReference type="SUPFAM" id="SSF49899">
    <property type="entry name" value="Concanavalin A-like lectins/glucanases"/>
    <property type="match status" value="1"/>
</dbReference>
<dbReference type="SUPFAM" id="SSF50939">
    <property type="entry name" value="Sialidases"/>
    <property type="match status" value="1"/>
</dbReference>
<gene>
    <name type="primary">TCNA</name>
</gene>
<comment type="function">
    <text>Developmentally regulated neuraminidase implicated in parasite invasion of cells.</text>
</comment>
<comment type="catalytic activity">
    <reaction>
        <text>Hydrolysis of alpha-(2-&gt;3)-, alpha-(2-&gt;6)-, alpha-(2-&gt;8)- glycosidic linkages of terminal sialic acid residues in oligosaccharides, glycoproteins, glycolipids, colominic acid and synthetic substrates.</text>
        <dbReference type="EC" id="3.2.1.18"/>
    </reaction>
</comment>
<comment type="subcellular location">
    <subcellularLocation>
        <location evidence="3">Cell membrane</location>
        <topology evidence="3">Lipid-anchor</topology>
        <topology evidence="3">GPI-anchor</topology>
    </subcellularLocation>
</comment>
<comment type="developmental stage">
    <text>Maximal activity in trypomastigotes, minimum in epimastigotes and not detectable in amastigotes.</text>
</comment>
<comment type="miscellaneous">
    <text>The variable lengths of the long tandem repeat domain could account in part for the polymorphism of the TCNA protein.</text>
</comment>
<comment type="similarity">
    <text evidence="3">Belongs to the glycosyl hydrolase 33 family.</text>
</comment>
<keyword id="KW-1003">Cell membrane</keyword>
<keyword id="KW-0325">Glycoprotein</keyword>
<keyword id="KW-0326">Glycosidase</keyword>
<keyword id="KW-0336">GPI-anchor</keyword>
<keyword id="KW-0378">Hydrolase</keyword>
<keyword id="KW-0449">Lipoprotein</keyword>
<keyword id="KW-0472">Membrane</keyword>
<keyword id="KW-0597">Phosphoprotein</keyword>
<keyword id="KW-0677">Repeat</keyword>
<proteinExistence type="evidence at transcript level"/>
<accession>P23253</accession>
<evidence type="ECO:0000255" key="1"/>
<evidence type="ECO:0000256" key="2">
    <source>
        <dbReference type="SAM" id="MobiDB-lite"/>
    </source>
</evidence>
<evidence type="ECO:0000305" key="3"/>
<name>TCNA_TRYCR</name>
<sequence>MVAIADARYETSSENSLIDTVAKYSVDDGETWETQIAIKNSRVSSVSRVVDPTVIVKGNKLYVLVGSYYSSRSYWSSHGDARDWDILLAVGEVTKSTAGGKITASIKWGSPVSLKKFFPAEMEGMHTNQFLGGAGVAIVASNGNLVYPVQVTNKRKQVFSKIFYSEDDGKTWKFGKGRSDFGCSEPVALEWEGKLIINTRVDWKRRLVYESSDMEKPWVEAVGTVSRVWGPSPKSNQPGSQTSFTAVTIEGMRVMLFTHPLNFKGRCVRDRLNLWLTDNQRIYNVGQVSIGDENSAYSSVLYKDDKLYCLHEINTDEVYSLVFARLVGELRIIKSVLRSWKNWTATCPAFAPLLIQPLRRQRVVVVPLSPRLVLLAFCRQRLPKRMGGSYRCVNASTANAERVRNGLKFAGVGGGALWPVSQQGQNQRYRFANHAFTLVASVTIHEAPRAASPLLGASLDSSGGKKLLGLSYDEKHQWQPIYGSTPVTPTGSWETGKRYHLVLTMANKIGSVYIDGELLEGSGQTVVPDGRTPDISHFYVGGYKRSDMPTISHVTVNNVLLYNRRQLNTEEIRTLFLSQDLIGTEAHMDSSSDSSAHSTPSTPADSSAHSTPSTPVDSSAHSTPSTPADSSAHGTPSTPVDSSAHGTPSTPADSSAHGTPSTPVDSSAHSTPSTPVDSSAHSTPSTPVDSSAHGAPSTPADSSAHGTPSTPVDSSAHGTPSTPADSSAHSTPSTPADSSAHSTPSTPADSSAHSTPSTPVDSSAHGTPSTPADSSAHSTPSTPADSSAHGTPSTPVDSSAHSTPSTPVDSSAHGTPSTPVDSSAHSTPSTPVDSSAHGTPSTPVDSSAHSTPSTPADSSAHSTPSTPADSSAHGTPSTPVDSSAHSTPSTPADSSAHSTPSTPVDSSAHSTPSTPADSSAHGTPSTPVDSSAHGTPSTPADSSAHSTPSTPADSSAHSTPSTPADSSAHSTPSTPVDSSAHSTPSTPADSSAHSTPSTPADSSAHSTPSTPADSSAHSTPSTPVDSSAHSTPSTPADSSAHGTPSTPADSSAHSTPSTPVDSSAHSTPSTPADSSAHGTPSTPADSSAHSTPSTPADSSAHGTPSTPADSSAHSTPSTPAGSSANGTVLILPDGAALSTFSGGGLLLCACALLLHVFFMAVF</sequence>